<organism>
    <name type="scientific">Bacillus cereus (strain ATCC 10987 / NRS 248)</name>
    <dbReference type="NCBI Taxonomy" id="222523"/>
    <lineage>
        <taxon>Bacteria</taxon>
        <taxon>Bacillati</taxon>
        <taxon>Bacillota</taxon>
        <taxon>Bacilli</taxon>
        <taxon>Bacillales</taxon>
        <taxon>Bacillaceae</taxon>
        <taxon>Bacillus</taxon>
        <taxon>Bacillus cereus group</taxon>
    </lineage>
</organism>
<feature type="chain" id="PRO_0000373842" description="Uncharacterized methyltransferase BCE_4457">
    <location>
        <begin position="1"/>
        <end position="212"/>
    </location>
</feature>
<feature type="binding site" evidence="1">
    <location>
        <position position="53"/>
    </location>
    <ligand>
        <name>S-adenosyl-L-methionine</name>
        <dbReference type="ChEBI" id="CHEBI:59789"/>
    </ligand>
</feature>
<feature type="binding site" evidence="1">
    <location>
        <position position="74"/>
    </location>
    <ligand>
        <name>S-adenosyl-L-methionine</name>
        <dbReference type="ChEBI" id="CHEBI:59789"/>
    </ligand>
</feature>
<feature type="binding site" evidence="1">
    <location>
        <position position="97"/>
    </location>
    <ligand>
        <name>S-adenosyl-L-methionine</name>
        <dbReference type="ChEBI" id="CHEBI:59789"/>
    </ligand>
</feature>
<gene>
    <name type="ordered locus">BCE_4457</name>
</gene>
<proteinExistence type="inferred from homology"/>
<protein>
    <recommendedName>
        <fullName evidence="1">Uncharacterized methyltransferase BCE_4457</fullName>
        <ecNumber evidence="1">2.1.1.-</ecNumber>
    </recommendedName>
</protein>
<accession>Q730F9</accession>
<sequence>MGTEFNGLFDEWAHTYDSFVQGEDIQYKEVFAHYEDILEDVVNKSFGNVLEFGVGTGNLTNKLLLAGRTVYGIEPSREMRMIAKEKLPKEFSITEGDFLSFEVPNSIDTIVSTYAFHHLTDDEKNVAIAKYSQLLNKGGKIVFADTIFADQDAYDKTVEAAKQRGFHELANDLQTEYYTRIPIMQTIFENNGFHVTFTRLNHFVWVMEATKQ</sequence>
<name>Y4457_BACC1</name>
<comment type="function">
    <text evidence="1">Could be a S-adenosyl-L-methionine-dependent methyltransferase.</text>
</comment>
<comment type="similarity">
    <text evidence="1">Belongs to the methyltransferase superfamily. YrrT family.</text>
</comment>
<reference key="1">
    <citation type="journal article" date="2004" name="Nucleic Acids Res.">
        <title>The genome sequence of Bacillus cereus ATCC 10987 reveals metabolic adaptations and a large plasmid related to Bacillus anthracis pXO1.</title>
        <authorList>
            <person name="Rasko D.A."/>
            <person name="Ravel J."/>
            <person name="Oekstad O.A."/>
            <person name="Helgason E."/>
            <person name="Cer R.Z."/>
            <person name="Jiang L."/>
            <person name="Shores K.A."/>
            <person name="Fouts D.E."/>
            <person name="Tourasse N.J."/>
            <person name="Angiuoli S.V."/>
            <person name="Kolonay J.F."/>
            <person name="Nelson W.C."/>
            <person name="Kolstoe A.-B."/>
            <person name="Fraser C.M."/>
            <person name="Read T.D."/>
        </authorList>
    </citation>
    <scope>NUCLEOTIDE SEQUENCE [LARGE SCALE GENOMIC DNA]</scope>
    <source>
        <strain>ATCC 10987 / NRS 248</strain>
    </source>
</reference>
<keyword id="KW-0489">Methyltransferase</keyword>
<keyword id="KW-0949">S-adenosyl-L-methionine</keyword>
<keyword id="KW-0808">Transferase</keyword>
<dbReference type="EC" id="2.1.1.-" evidence="1"/>
<dbReference type="EMBL" id="AE017194">
    <property type="protein sequence ID" value="AAS43358.1"/>
    <property type="molecule type" value="Genomic_DNA"/>
</dbReference>
<dbReference type="SMR" id="Q730F9"/>
<dbReference type="DNASU" id="2750845"/>
<dbReference type="KEGG" id="bca:BCE_4457"/>
<dbReference type="HOGENOM" id="CLU_111961_0_0_9"/>
<dbReference type="Proteomes" id="UP000002527">
    <property type="component" value="Chromosome"/>
</dbReference>
<dbReference type="GO" id="GO:0008757">
    <property type="term" value="F:S-adenosylmethionine-dependent methyltransferase activity"/>
    <property type="evidence" value="ECO:0007669"/>
    <property type="project" value="UniProtKB-UniRule"/>
</dbReference>
<dbReference type="GO" id="GO:0032259">
    <property type="term" value="P:methylation"/>
    <property type="evidence" value="ECO:0007669"/>
    <property type="project" value="UniProtKB-KW"/>
</dbReference>
<dbReference type="CDD" id="cd02440">
    <property type="entry name" value="AdoMet_MTases"/>
    <property type="match status" value="1"/>
</dbReference>
<dbReference type="Gene3D" id="3.40.50.150">
    <property type="entry name" value="Vaccinia Virus protein VP39"/>
    <property type="match status" value="1"/>
</dbReference>
<dbReference type="HAMAP" id="MF_02100">
    <property type="entry name" value="Methyltr_YrrT"/>
    <property type="match status" value="1"/>
</dbReference>
<dbReference type="InterPro" id="IPR041698">
    <property type="entry name" value="Methyltransf_25"/>
</dbReference>
<dbReference type="InterPro" id="IPR029063">
    <property type="entry name" value="SAM-dependent_MTases_sf"/>
</dbReference>
<dbReference type="InterPro" id="IPR023553">
    <property type="entry name" value="Uncharacterised_MeTfrase_YrrT"/>
</dbReference>
<dbReference type="PANTHER" id="PTHR43861:SF1">
    <property type="entry name" value="TRANS-ACONITATE 2-METHYLTRANSFERASE"/>
    <property type="match status" value="1"/>
</dbReference>
<dbReference type="PANTHER" id="PTHR43861">
    <property type="entry name" value="TRANS-ACONITATE 2-METHYLTRANSFERASE-RELATED"/>
    <property type="match status" value="1"/>
</dbReference>
<dbReference type="Pfam" id="PF13649">
    <property type="entry name" value="Methyltransf_25"/>
    <property type="match status" value="1"/>
</dbReference>
<dbReference type="SUPFAM" id="SSF53335">
    <property type="entry name" value="S-adenosyl-L-methionine-dependent methyltransferases"/>
    <property type="match status" value="1"/>
</dbReference>
<evidence type="ECO:0000255" key="1">
    <source>
        <dbReference type="HAMAP-Rule" id="MF_02100"/>
    </source>
</evidence>